<organism>
    <name type="scientific">Streptococcus gordonii (strain Challis / ATCC 35105 / BCRC 15272 / CH1 / DL1 / V288)</name>
    <dbReference type="NCBI Taxonomy" id="467705"/>
    <lineage>
        <taxon>Bacteria</taxon>
        <taxon>Bacillati</taxon>
        <taxon>Bacillota</taxon>
        <taxon>Bacilli</taxon>
        <taxon>Lactobacillales</taxon>
        <taxon>Streptococcaceae</taxon>
        <taxon>Streptococcus</taxon>
    </lineage>
</organism>
<name>GUAC_STRGC</name>
<comment type="function">
    <text evidence="1">Catalyzes the irreversible NADPH-dependent deamination of GMP to IMP. It functions in the conversion of nucleobase, nucleoside and nucleotide derivatives of G to A nucleotides, and in maintaining the intracellular balance of A and G nucleotides.</text>
</comment>
<comment type="catalytic activity">
    <reaction evidence="1">
        <text>IMP + NH4(+) + NADP(+) = GMP + NADPH + 2 H(+)</text>
        <dbReference type="Rhea" id="RHEA:17185"/>
        <dbReference type="ChEBI" id="CHEBI:15378"/>
        <dbReference type="ChEBI" id="CHEBI:28938"/>
        <dbReference type="ChEBI" id="CHEBI:57783"/>
        <dbReference type="ChEBI" id="CHEBI:58053"/>
        <dbReference type="ChEBI" id="CHEBI:58115"/>
        <dbReference type="ChEBI" id="CHEBI:58349"/>
        <dbReference type="EC" id="1.7.1.7"/>
    </reaction>
</comment>
<comment type="similarity">
    <text evidence="1">Belongs to the IMPDH/GMPR family. GuaC type 2 subfamily.</text>
</comment>
<keyword id="KW-0521">NADP</keyword>
<keyword id="KW-0560">Oxidoreductase</keyword>
<keyword id="KW-1185">Reference proteome</keyword>
<accession>A8AXD6</accession>
<protein>
    <recommendedName>
        <fullName evidence="1">GMP reductase</fullName>
        <ecNumber evidence="1">1.7.1.7</ecNumber>
    </recommendedName>
    <alternativeName>
        <fullName evidence="1">Guanosine 5'-monophosphate oxidoreductase</fullName>
        <shortName evidence="1">Guanosine monophosphate reductase</shortName>
    </alternativeName>
</protein>
<evidence type="ECO:0000255" key="1">
    <source>
        <dbReference type="HAMAP-Rule" id="MF_01511"/>
    </source>
</evidence>
<gene>
    <name evidence="1" type="primary">guaC</name>
    <name type="ordered locus">SGO_1159</name>
</gene>
<dbReference type="EC" id="1.7.1.7" evidence="1"/>
<dbReference type="EMBL" id="CP000725">
    <property type="protein sequence ID" value="ABV09344.1"/>
    <property type="molecule type" value="Genomic_DNA"/>
</dbReference>
<dbReference type="RefSeq" id="WP_012000563.1">
    <property type="nucleotide sequence ID" value="NC_009785.1"/>
</dbReference>
<dbReference type="SMR" id="A8AXD6"/>
<dbReference type="STRING" id="467705.SGO_1159"/>
<dbReference type="KEGG" id="sgo:SGO_1159"/>
<dbReference type="eggNOG" id="COG0516">
    <property type="taxonomic scope" value="Bacteria"/>
</dbReference>
<dbReference type="HOGENOM" id="CLU_022552_5_0_9"/>
<dbReference type="Proteomes" id="UP000001131">
    <property type="component" value="Chromosome"/>
</dbReference>
<dbReference type="GO" id="GO:0005829">
    <property type="term" value="C:cytosol"/>
    <property type="evidence" value="ECO:0007669"/>
    <property type="project" value="TreeGrafter"/>
</dbReference>
<dbReference type="GO" id="GO:1902560">
    <property type="term" value="C:GMP reductase complex"/>
    <property type="evidence" value="ECO:0007669"/>
    <property type="project" value="InterPro"/>
</dbReference>
<dbReference type="GO" id="GO:0003920">
    <property type="term" value="F:GMP reductase activity"/>
    <property type="evidence" value="ECO:0007669"/>
    <property type="project" value="UniProtKB-UniRule"/>
</dbReference>
<dbReference type="GO" id="GO:0006163">
    <property type="term" value="P:purine nucleotide metabolic process"/>
    <property type="evidence" value="ECO:0007669"/>
    <property type="project" value="UniProtKB-UniRule"/>
</dbReference>
<dbReference type="CDD" id="cd00381">
    <property type="entry name" value="IMPDH"/>
    <property type="match status" value="1"/>
</dbReference>
<dbReference type="FunFam" id="3.20.20.70:FF:000424">
    <property type="entry name" value="Inosine-5'-monophosphate dehydrogenase 2"/>
    <property type="match status" value="1"/>
</dbReference>
<dbReference type="Gene3D" id="3.20.20.70">
    <property type="entry name" value="Aldolase class I"/>
    <property type="match status" value="1"/>
</dbReference>
<dbReference type="HAMAP" id="MF_01511">
    <property type="entry name" value="GMP_reduct_type2"/>
    <property type="match status" value="1"/>
</dbReference>
<dbReference type="InterPro" id="IPR013785">
    <property type="entry name" value="Aldolase_TIM"/>
</dbReference>
<dbReference type="InterPro" id="IPR050139">
    <property type="entry name" value="GMP_reductase"/>
</dbReference>
<dbReference type="InterPro" id="IPR005994">
    <property type="entry name" value="GuaC_type_2"/>
</dbReference>
<dbReference type="InterPro" id="IPR015875">
    <property type="entry name" value="IMP_DH/GMP_Rdtase_CS"/>
</dbReference>
<dbReference type="InterPro" id="IPR001093">
    <property type="entry name" value="IMP_DH_GMPRt"/>
</dbReference>
<dbReference type="NCBIfam" id="TIGR01306">
    <property type="entry name" value="GMP_reduct_2"/>
    <property type="match status" value="1"/>
</dbReference>
<dbReference type="NCBIfam" id="NF003966">
    <property type="entry name" value="PRK05458.1"/>
    <property type="match status" value="1"/>
</dbReference>
<dbReference type="PANTHER" id="PTHR43170">
    <property type="entry name" value="GMP REDUCTASE"/>
    <property type="match status" value="1"/>
</dbReference>
<dbReference type="PANTHER" id="PTHR43170:SF5">
    <property type="entry name" value="GMP REDUCTASE"/>
    <property type="match status" value="1"/>
</dbReference>
<dbReference type="Pfam" id="PF00478">
    <property type="entry name" value="IMPDH"/>
    <property type="match status" value="1"/>
</dbReference>
<dbReference type="PIRSF" id="PIRSF036500">
    <property type="entry name" value="GMP_red_Firmic"/>
    <property type="match status" value="1"/>
</dbReference>
<dbReference type="SMART" id="SM01240">
    <property type="entry name" value="IMPDH"/>
    <property type="match status" value="1"/>
</dbReference>
<dbReference type="SUPFAM" id="SSF51412">
    <property type="entry name" value="Inosine monophosphate dehydrogenase (IMPDH)"/>
    <property type="match status" value="1"/>
</dbReference>
<dbReference type="PROSITE" id="PS00487">
    <property type="entry name" value="IMP_DH_GMP_RED"/>
    <property type="match status" value="1"/>
</dbReference>
<proteinExistence type="inferred from homology"/>
<reference key="1">
    <citation type="journal article" date="2007" name="J. Bacteriol.">
        <title>Genome-wide transcriptional changes in Streptococcus gordonii in response to competence signaling peptide.</title>
        <authorList>
            <person name="Vickerman M.M."/>
            <person name="Iobst S."/>
            <person name="Jesionowski A.M."/>
            <person name="Gill S.R."/>
        </authorList>
    </citation>
    <scope>NUCLEOTIDE SEQUENCE [LARGE SCALE GENOMIC DNA]</scope>
    <source>
        <strain>Challis / ATCC 35105 / BCRC 15272 / CH1 / DL1 / V288</strain>
    </source>
</reference>
<feature type="chain" id="PRO_1000087526" description="GMP reductase">
    <location>
        <begin position="1"/>
        <end position="327"/>
    </location>
</feature>
<feature type="active site" description="Thioimidate intermediate" evidence="1">
    <location>
        <position position="176"/>
    </location>
</feature>
<feature type="binding site" evidence="1">
    <location>
        <begin position="205"/>
        <end position="228"/>
    </location>
    <ligand>
        <name>NADP(+)</name>
        <dbReference type="ChEBI" id="CHEBI:58349"/>
    </ligand>
</feature>
<sequence>MLNDFQVFDYEDIQLIPAKCVVKSRAEADTRVKFGNHTFRLPVVPSNMQTIIDESVAEELARGGYFYIMHRFDEEGRKPFVKQMHEKGLIASISVGVKDYEYDFVSSLKEDAPEYITIDIAHGHSDSVIKMIQHIKKELPETFVIAGNVGTPEAVRELENAGADATKVGIGPGKVCITKVKTGFGTGGWQLSALRWCSKVARKPIIADGGIRTHGDIAKSIRFGASMVMIGSLFAGHIESPGETIEIDGDKFKEYYGSASEYQKGAYKNVEGKKILLPAKGHLQDTLTEMEQDLQSSISYAGGRDLHSLTRVDYVIVKNSIWNGDAH</sequence>